<gene>
    <name evidence="3" type="primary">ptmD</name>
</gene>
<dbReference type="EC" id="2.5.1.-" evidence="2"/>
<dbReference type="EMBL" id="LC027936">
    <property type="protein sequence ID" value="BAU61555.1"/>
    <property type="molecule type" value="Genomic_DNA"/>
</dbReference>
<dbReference type="SMR" id="A0A140JWS8"/>
<dbReference type="GO" id="GO:0016765">
    <property type="term" value="F:transferase activity, transferring alkyl or aryl (other than methyl) groups"/>
    <property type="evidence" value="ECO:0007669"/>
    <property type="project" value="InterPro"/>
</dbReference>
<dbReference type="GO" id="GO:0009820">
    <property type="term" value="P:alkaloid metabolic process"/>
    <property type="evidence" value="ECO:0007669"/>
    <property type="project" value="InterPro"/>
</dbReference>
<dbReference type="CDD" id="cd13929">
    <property type="entry name" value="PT-DMATS_CymD"/>
    <property type="match status" value="1"/>
</dbReference>
<dbReference type="InterPro" id="IPR033964">
    <property type="entry name" value="Aro_prenylTrfase"/>
</dbReference>
<dbReference type="InterPro" id="IPR017795">
    <property type="entry name" value="Aro_prenylTrfase_DMATS"/>
</dbReference>
<dbReference type="InterPro" id="IPR012148">
    <property type="entry name" value="DMATS-type_fun"/>
</dbReference>
<dbReference type="NCBIfam" id="TIGR03429">
    <property type="entry name" value="arom_pren_DMATS"/>
    <property type="match status" value="1"/>
</dbReference>
<dbReference type="PANTHER" id="PTHR40627">
    <property type="entry name" value="INDOLE PRENYLTRANSFERASE TDIB-RELATED"/>
    <property type="match status" value="1"/>
</dbReference>
<dbReference type="PANTHER" id="PTHR40627:SF3">
    <property type="entry name" value="PRENYLTRANSFERASE ASQH2-RELATED"/>
    <property type="match status" value="1"/>
</dbReference>
<dbReference type="Pfam" id="PF11991">
    <property type="entry name" value="Trp_DMAT"/>
    <property type="match status" value="1"/>
</dbReference>
<dbReference type="PIRSF" id="PIRSF000509">
    <property type="entry name" value="Trp_DMAT"/>
    <property type="match status" value="1"/>
</dbReference>
<dbReference type="SFLD" id="SFLDS00036">
    <property type="entry name" value="Aromatic_Prenyltransferase"/>
    <property type="match status" value="1"/>
</dbReference>
<keyword id="KW-0808">Transferase</keyword>
<organism>
    <name type="scientific">Penicillium ochrochloron</name>
    <dbReference type="NCBI Taxonomy" id="69780"/>
    <lineage>
        <taxon>Eukaryota</taxon>
        <taxon>Fungi</taxon>
        <taxon>Dikarya</taxon>
        <taxon>Ascomycota</taxon>
        <taxon>Pezizomycotina</taxon>
        <taxon>Eurotiomycetes</taxon>
        <taxon>Eurotiomycetidae</taxon>
        <taxon>Eurotiales</taxon>
        <taxon>Aspergillaceae</taxon>
        <taxon>Penicillium</taxon>
    </lineage>
</organism>
<protein>
    <recommendedName>
        <fullName evidence="3">Indole diterpene prenyltransferase ptmD</fullName>
        <ecNumber evidence="2">2.5.1.-</ecNumber>
    </recommendedName>
    <alternativeName>
        <fullName evidence="3">Penitrem biosynthesis cluster 1 protein D</fullName>
    </alternativeName>
</protein>
<evidence type="ECO:0000250" key="1">
    <source>
        <dbReference type="UniProtKB" id="Q50EL0"/>
    </source>
</evidence>
<evidence type="ECO:0000269" key="2">
    <source>
    </source>
</evidence>
<evidence type="ECO:0000303" key="3">
    <source>
    </source>
</evidence>
<evidence type="ECO:0000305" key="4"/>
<comment type="function">
    <text evidence="2">Indole diterpene prenyltransferase; part of the gene cluster that mediates the biosynthesis of the indole diterpenes penitrems (PubMed:25831977). The geranylgeranyl diphosphate (GGPP) synthase ptmG catalyzes the first step in penitrem biosynthesis via conversion of farnesyl pyrophosphate and isopentyl pyrophosphate into geranylgeranyl pyrophosphate (GGPP) (PubMed:25831977). Condensation of indole-3-glycerol phosphate with GGPP by the prenyl transferase ptmC then forms 3-geranylgeranylindole (3-GGI) (PubMed:25831977). Epoxidation by the FAD-dependent monooxygenase ptmM leads to a epoxidized-GGI that is substrate of the terpene cyclase ptmB for cyclization to yield paspaline (PubMed:25831977). Paspaline is subsequently converted to 13-desoxypaxilline by the cytochrome P450 monooxygenase ptmP, the latter being then converted to paxilline by the cytochrome P450 monooxygenase ptmQ (PubMed:25831977). Paxilline is converted to beta-paxitriol via C-10 ketoreduction by the short-chain dehydrogenase ptmH which can be monoprenylated at the C-20 by the indole diterpene prenyltransferase ptmD (PubMed:25831977). A two-step elimination (acetylation and elimination) process performed by the O-acetyltransferase ptmV and ptmI leads to the production of the prenylated form of penijanthine (PubMed:25831977). The FAD-linked oxidoreductase ptmO then converts the prenylated form of penijanthine into PC-M5 which is in turn transformed into PC-M4 by the aromatic dimethylallyltransferase ptmE (PubMed:25831977). Five sequential oxidative transformations performed by the cytochrome P450 monooxygenases ptmK, ptmU, ptmL, ptmN and ptmJ yield the various penitrem compounds. PtmK, ptmU and ptmM are involved in the formation of the key bicyclic ring of penitrem C via the formation of the intermediates secopenitrem D and penitrem D. PtmL catalyzes the epoxidation of penitrem D and C to yield penitrem B and F, respectively. PtmJ catalyzes the last benzylic hydroxylation to convert penitrem B to prenitrem E and penitrem F to penitrem A (PubMed:25831977).</text>
</comment>
<comment type="pathway">
    <text evidence="2">Secondary metabolite biosynthesis.</text>
</comment>
<comment type="similarity">
    <text evidence="4">Belongs to the tryptophan dimethylallyltransferase family.</text>
</comment>
<feature type="chain" id="PRO_0000446559" description="Indole diterpene prenyltransferase ptmD">
    <location>
        <begin position="1"/>
        <end position="427"/>
    </location>
</feature>
<feature type="binding site" evidence="1">
    <location>
        <begin position="77"/>
        <end position="78"/>
    </location>
    <ligand>
        <name>L-tryptophan</name>
        <dbReference type="ChEBI" id="CHEBI:57912"/>
    </ligand>
</feature>
<feature type="binding site" evidence="1">
    <location>
        <position position="99"/>
    </location>
    <ligand>
        <name>substrate</name>
    </ligand>
</feature>
<feature type="binding site" evidence="1">
    <location>
        <position position="186"/>
    </location>
    <ligand>
        <name>substrate</name>
    </ligand>
</feature>
<feature type="binding site" evidence="1">
    <location>
        <position position="188"/>
    </location>
    <ligand>
        <name>substrate</name>
    </ligand>
</feature>
<feature type="binding site" evidence="1">
    <location>
        <position position="259"/>
    </location>
    <ligand>
        <name>substrate</name>
    </ligand>
</feature>
<feature type="binding site" evidence="1">
    <location>
        <position position="261"/>
    </location>
    <ligand>
        <name>substrate</name>
    </ligand>
</feature>
<feature type="binding site" evidence="1">
    <location>
        <position position="263"/>
    </location>
    <ligand>
        <name>substrate</name>
    </ligand>
</feature>
<feature type="binding site" evidence="1">
    <location>
        <position position="344"/>
    </location>
    <ligand>
        <name>substrate</name>
    </ligand>
</feature>
<feature type="binding site" evidence="1">
    <location>
        <position position="409"/>
    </location>
    <ligand>
        <name>substrate</name>
    </ligand>
</feature>
<feature type="binding site" evidence="1">
    <location>
        <position position="413"/>
    </location>
    <ligand>
        <name>substrate</name>
    </ligand>
</feature>
<name>PTMD_PENOH</name>
<reference key="1">
    <citation type="journal article" date="2015" name="Angew. Chem. Int. Ed.">
        <title>Reconstitution of biosynthetic machinery for the synthesis of the highly elaborated indole diterpene penitrem.</title>
        <authorList>
            <person name="Liu C."/>
            <person name="Tagami K."/>
            <person name="Minami A."/>
            <person name="Matsumoto T."/>
            <person name="Frisvad J.C."/>
            <person name="Suzuki H."/>
            <person name="Ishikawa J."/>
            <person name="Gomi K."/>
            <person name="Oikawa H."/>
        </authorList>
    </citation>
    <scope>NUCLEOTIDE SEQUENCE [GENOMIC DNA]</scope>
    <scope>IDENTIFICATION</scope>
    <scope>FUNCTION</scope>
    <scope>PATHWAY</scope>
    <source>
        <strain>ATCC 90288 / AK-40</strain>
    </source>
</reference>
<sequence>MTNSLLTIGDMVQGVELPDADRQFWWDSLAPILSRMLQCSKYSVESQANILSFFKDFIVPSYGPRPSIGGEFFWKSYVTYNHTPGQVSFNFHKDKCTVRLSNVPTAPLAGTASDPFNQKGVVQTIKQIQKALPDMDITLFDYFSEAFLVADEDTVGLDARKPVPQYNQLVVASMLGYDFEPVPRVKVYFNPRWKALQMNTENHDLIWTAINNLGSPIKSYKRTLDLLQECGTPRQLGGWIFQPEFISFDLAENMSNAARLKLYGFTTKTCWSHIESIYTLDGRLNDAETQRGLAVLKRLWHLALSIPEDHDENQDLPPCPHLTAGVIYNYELRENSAKPEAKIYIPVRFYGSGDGKVIEGLVDFFKSEGWDELARSYQRDFVSVFSTPDGKMAGEHHDISFSYKNEHPYVTAYYRPELIRPMERHIV</sequence>
<accession>A0A140JWS8</accession>
<proteinExistence type="inferred from homology"/>